<evidence type="ECO:0000255" key="1"/>
<evidence type="ECO:0000256" key="2">
    <source>
        <dbReference type="SAM" id="MobiDB-lite"/>
    </source>
</evidence>
<evidence type="ECO:0000269" key="3">
    <source>
    </source>
</evidence>
<evidence type="ECO:0000269" key="4">
    <source>
    </source>
</evidence>
<evidence type="ECO:0000269" key="5">
    <source>
    </source>
</evidence>
<evidence type="ECO:0000303" key="6">
    <source>
    </source>
</evidence>
<evidence type="ECO:0000303" key="7">
    <source>
    </source>
</evidence>
<evidence type="ECO:0000305" key="8"/>
<evidence type="ECO:0000312" key="9">
    <source>
        <dbReference type="EMBL" id="ACO95124.1"/>
    </source>
</evidence>
<evidence type="ECO:0000312" key="10">
    <source>
        <dbReference type="EMBL" id="CAD56562.2"/>
    </source>
</evidence>
<evidence type="ECO:0000312" key="11">
    <source>
        <dbReference type="WormBase" id="C36B1.8b"/>
    </source>
</evidence>
<reference evidence="8 9" key="1">
    <citation type="journal article" date="2009" name="PLoS Genet.">
        <title>GLS-1, a novel P granule component, modulates a network of conserved RNA regulators to influence germ cell fate decisions.</title>
        <authorList>
            <person name="Rybarska A."/>
            <person name="Harterink M."/>
            <person name="Jedamzik B."/>
            <person name="Kupinski A.P."/>
            <person name="Schmid M."/>
            <person name="Eckmann C.R."/>
        </authorList>
    </citation>
    <scope>NUCLEOTIDE SEQUENCE [MRNA] (ISOFORM C)</scope>
    <scope>ALTERNATIVE SPLICING</scope>
    <scope>FUNCTION</scope>
    <scope>INTERACTION WITH GLD-3</scope>
    <scope>SUBCELLULAR LOCATION</scope>
    <scope>TISSUE SPECIFICITY</scope>
    <scope>DEVELOPMENTAL STAGE</scope>
    <scope>DISRUPTION PHENOTYPE</scope>
</reference>
<reference evidence="10" key="2">
    <citation type="journal article" date="1998" name="Science">
        <title>Genome sequence of the nematode C. elegans: a platform for investigating biology.</title>
        <authorList>
            <consortium name="The C. elegans sequencing consortium"/>
        </authorList>
    </citation>
    <scope>NUCLEOTIDE SEQUENCE [LARGE SCALE GENOMIC DNA]</scope>
    <source>
        <strain>Bristol N2</strain>
    </source>
</reference>
<reference evidence="8 9" key="3">
    <citation type="journal article" date="2009" name="Genes Dev.">
        <title>Two conserved regulatory cytoplasmic poly(A) polymerases, GLD-4 and GLD-2, regulate meiotic progression in C. elegans.</title>
        <authorList>
            <person name="Schmid M."/>
            <person name="Kuchler B."/>
            <person name="Eckmann C.R."/>
        </authorList>
    </citation>
    <scope>FUNCTION</scope>
    <scope>INTERACTION WITH GLD-4</scope>
</reference>
<protein>
    <recommendedName>
        <fullName evidence="9">Germline survival defective-1</fullName>
    </recommendedName>
</protein>
<organism>
    <name type="scientific">Caenorhabditis elegans</name>
    <dbReference type="NCBI Taxonomy" id="6239"/>
    <lineage>
        <taxon>Eukaryota</taxon>
        <taxon>Metazoa</taxon>
        <taxon>Ecdysozoa</taxon>
        <taxon>Nematoda</taxon>
        <taxon>Chromadorea</taxon>
        <taxon>Rhabditida</taxon>
        <taxon>Rhabditina</taxon>
        <taxon>Rhabditomorpha</taxon>
        <taxon>Rhabditoidea</taxon>
        <taxon>Rhabditidae</taxon>
        <taxon>Peloderinae</taxon>
        <taxon>Caenorhabditis</taxon>
    </lineage>
</organism>
<comment type="function">
    <text evidence="3 4">Required maternally for germline survival by forming a maternal complex with gld-3. During hermaphrodite development forms a complex with gld-3 which promotes the sperm/oocyte switch freeing the translational repressor fbf to turn off sperm promoting factors. Required for proper oocyte differentiation and oogenic meiotic arrest. Stimulates the enzymatic activity of gld-4 and together they prevent gld-1 mRNA degradation.</text>
</comment>
<comment type="subunit">
    <text evidence="3 4">Isoform C interacts (via C-terminus) with gld-3 isoform A (via C-terminus) in an RNA-independent manner. Isoform C interacts with gld-4.</text>
</comment>
<comment type="interaction">
    <interactant intactId="EBI-322416">
        <id>Q8I4M5</id>
    </interactant>
    <interactant intactId="EBI-14989519">
        <id>Q95ZK7-1</id>
        <label>gld-3</label>
    </interactant>
    <organismsDiffer>false</organismsDiffer>
    <experiments>3</experiments>
</comment>
<comment type="interaction">
    <interactant intactId="EBI-14989623">
        <id>Q8I4M5-3</id>
    </interactant>
    <interactant intactId="EBI-14989519">
        <id>Q95ZK7-1</id>
        <label>gld-3</label>
    </interactant>
    <organismsDiffer>false</organismsDiffer>
    <experiments>6</experiments>
</comment>
<comment type="subcellular location">
    <subcellularLocation>
        <location evidence="4">Cytoplasm</location>
    </subcellularLocation>
    <subcellularLocation>
        <location evidence="4">Cytoplasmic granule</location>
    </subcellularLocation>
    <text evidence="4">Localizes to P granules.</text>
</comment>
<comment type="alternative products">
    <event type="alternative splicing"/>
    <isoform>
        <id>Q8I4M5-1</id>
        <name evidence="5">b</name>
        <sequence type="displayed"/>
    </isoform>
    <isoform>
        <id>Q8I4M5-2</id>
        <name evidence="5">a</name>
        <sequence type="described" ref="VSP_043968"/>
    </isoform>
    <isoform>
        <id>Q8I4M5-3</id>
        <name evidence="4 5">c</name>
        <sequence type="described" ref="VSP_043967"/>
    </isoform>
    <text evidence="8">Additional isoforms seem to exist. Experimental confirmation may be lacking for some isoforms.</text>
</comment>
<comment type="tissue specificity">
    <text evidence="4">Expressed in the germline (at protein level). In the early embryo is expressed in all cells, then becomes gradually restricted to the germ cell lineage and enriches in P granules (at protein level). In adult hermaphrodites, is expressed in the mitotic region, accumulates during early stages of meiotic prophase I and is slightly less abundant in maturing oocytes (at protein level).</text>
</comment>
<comment type="developmental stage">
    <text evidence="4">Expressed both maternally and zygotically throughout development and in adult hermaphrodites (at protein level).</text>
</comment>
<comment type="disruption phenotype">
    <text evidence="4">Loss of maternal and zygotic expression causes germline survival defects. Zygotic mutants show a masculinized hermaphrodite germline. At 25 degress Celsius, hermaphrodite zygotic mutants show small oogenic cells that are either arrested in pachytene or have undergone abnormal meiotic prophase progression and failed to arrest in diakinesis, often resulting in endoreduplicating oocyte nuclei.</text>
</comment>
<comment type="miscellaneous">
    <text evidence="4">Trans-spliced exclusively to SL2, suggesting a transcriptional coregulation with the upstream gene dhfr-1.</text>
</comment>
<comment type="sequence caution" evidence="8">
    <conflict type="erroneous initiation">
        <sequence resource="EMBL-CDS" id="ACO95124"/>
    </conflict>
    <text>Extended N-terminus.</text>
</comment>
<name>GLS1_CAEEL</name>
<feature type="signal peptide" evidence="1">
    <location>
        <begin position="1"/>
        <end position="25"/>
    </location>
</feature>
<feature type="chain" id="PRO_0000418088" description="Germline survival defective-1" evidence="1">
    <location>
        <begin position="26"/>
        <end position="1052"/>
    </location>
</feature>
<feature type="region of interest" description="Disordered" evidence="2">
    <location>
        <begin position="41"/>
        <end position="320"/>
    </location>
</feature>
<feature type="region of interest" description="gld-4 binding" evidence="3">
    <location>
        <begin position="424"/>
        <end position="732"/>
    </location>
</feature>
<feature type="region of interest" description="Disordered" evidence="2">
    <location>
        <begin position="478"/>
        <end position="543"/>
    </location>
</feature>
<feature type="region of interest" description="Disordered" evidence="2">
    <location>
        <begin position="667"/>
        <end position="689"/>
    </location>
</feature>
<feature type="region of interest" description="gld-3 binding" evidence="4">
    <location>
        <begin position="892"/>
        <end position="1052"/>
    </location>
</feature>
<feature type="region of interest" description="Disordered" evidence="2">
    <location>
        <begin position="933"/>
        <end position="965"/>
    </location>
</feature>
<feature type="region of interest" description="Disordered" evidence="2">
    <location>
        <begin position="1033"/>
        <end position="1052"/>
    </location>
</feature>
<feature type="compositionally biased region" description="Low complexity" evidence="2">
    <location>
        <begin position="67"/>
        <end position="145"/>
    </location>
</feature>
<feature type="compositionally biased region" description="Polar residues" evidence="2">
    <location>
        <begin position="163"/>
        <end position="172"/>
    </location>
</feature>
<feature type="compositionally biased region" description="Basic and acidic residues" evidence="2">
    <location>
        <begin position="178"/>
        <end position="190"/>
    </location>
</feature>
<feature type="compositionally biased region" description="Low complexity" evidence="2">
    <location>
        <begin position="244"/>
        <end position="279"/>
    </location>
</feature>
<feature type="compositionally biased region" description="Basic and acidic residues" evidence="2">
    <location>
        <begin position="305"/>
        <end position="320"/>
    </location>
</feature>
<feature type="compositionally biased region" description="Polar residues" evidence="2">
    <location>
        <begin position="480"/>
        <end position="514"/>
    </location>
</feature>
<feature type="compositionally biased region" description="Acidic residues" evidence="2">
    <location>
        <begin position="674"/>
        <end position="689"/>
    </location>
</feature>
<feature type="compositionally biased region" description="Low complexity" evidence="2">
    <location>
        <begin position="950"/>
        <end position="963"/>
    </location>
</feature>
<feature type="compositionally biased region" description="Gly residues" evidence="2">
    <location>
        <begin position="1038"/>
        <end position="1052"/>
    </location>
</feature>
<feature type="splice variant" id="VSP_043967" description="In isoform c." evidence="6 7">
    <location>
        <begin position="1"/>
        <end position="44"/>
    </location>
</feature>
<feature type="splice variant" id="VSP_043968" description="In isoform a." evidence="7">
    <location>
        <begin position="854"/>
        <end position="856"/>
    </location>
</feature>
<accession>Q8I4M5</accession>
<accession>C3UPA2</accession>
<accession>C6KRM2</accession>
<accession>Q93342</accession>
<keyword id="KW-0025">Alternative splicing</keyword>
<keyword id="KW-0963">Cytoplasm</keyword>
<keyword id="KW-0217">Developmental protein</keyword>
<keyword id="KW-0469">Meiosis</keyword>
<keyword id="KW-1185">Reference proteome</keyword>
<keyword id="KW-0732">Signal</keyword>
<sequence length="1052" mass="116014">MRCLISYLFHSFLIFLKFIRSDVTALTLQEKRKKSRLTGILMKSMANKKNHQQKKSTDGSTMNGNNATATAAATTQNSSQIGQNSNSSHSVTNDNTSSNNASTSTSSITSTTTTTTTVPSSQQSQSQNQYSHQRLSSTSSTSQQTGISKFPAKKAGHNELEKTSNTANSQSGAFKGTTNKDRPKEKEKNTHSGNRQSQVNHNHHHSNHVSGNQQNRKNKNRDHSNQSYRGGYTHNHNNYHSLENAKSSGFLSNSSLSSAGQISASSAPPVSTTPTAIPIFQESKIVQTDPPVEEAKKKKEKPKIKRDEEPMPYKSTDPKNMDSVMAFKEHDEWDKVEFMCELVSFLSPTDLRLLGNCIEGSVRCYNNQMRPVEKTSNCSDPTAGLPQFVCSPPPPPQQVYYFPGIADAALYQTRNAVNSVFVQQHPPGLPPLLGGMQNIMYPPDANFHHSTSCTTPSSSVSVANKDVNNVPVVLSSSVNGISNNIPSDRQQLDSKPNTARGSSGNINQSNTTSPEPEPGSNHISTTAANPAHPTSVTVPQSVPPVPQEPELFLKSVLDLTSYIYTLMAVCSSTNRKSAAKISDYVQNVILREKSQILERIPDELDKITVLQEIGKIVAAMTHHPAITLDDKMKYAALRDGLRAQIETLFRQYYTTQKQLEQSNLVVPSSQAVGDENDTDSDHESEEEFEPLSGVMGSRFESNPVQPSPSVPGTFFIIRFIGRQIEKNDNLFSLEIHWSDGDRTFAQRSRDQLKALQHRLLDEFGQQRSEKYLHQGCTTSYSSFDDDNKKLSASTSTMETFAPNGERIVPRLARDATPAQYVQYINELSDLPARMMLSAVICEEFNGTRAKTEDLLQETREASDGLIYSRWKNPRAKSPVRYFKRNATGSIDPIELPVNMQPFLYSNIPQTQVQTLFPSCSNCGGPHAPKHCEKQTLLSKKGDHRTRSDGEGSQQNGGTSSSNSYAPIHANLPHAVYIENPQAMLGSNHFNHHQQQHIIQNTIFHNGGQFRANGTYEPQIPIAYYHAQGTVQNSNNTGGVNGNSGGGNQNSNF</sequence>
<dbReference type="EMBL" id="FJ610055">
    <property type="protein sequence ID" value="ACO95124.1"/>
    <property type="status" value="ALT_INIT"/>
    <property type="molecule type" value="mRNA"/>
</dbReference>
<dbReference type="EMBL" id="Z80215">
    <property type="protein sequence ID" value="CAB02273.3"/>
    <property type="molecule type" value="Genomic_DNA"/>
</dbReference>
<dbReference type="EMBL" id="Z80215">
    <property type="protein sequence ID" value="CAD56562.2"/>
    <property type="molecule type" value="Genomic_DNA"/>
</dbReference>
<dbReference type="EMBL" id="Z80215">
    <property type="protein sequence ID" value="CAZ65476.1"/>
    <property type="molecule type" value="Genomic_DNA"/>
</dbReference>
<dbReference type="PIR" id="T19779">
    <property type="entry name" value="T19779"/>
</dbReference>
<dbReference type="RefSeq" id="NP_001250878.1">
    <molecule id="Q8I4M5-3"/>
    <property type="nucleotide sequence ID" value="NM_001263949.3"/>
</dbReference>
<dbReference type="RefSeq" id="NP_492365.3">
    <molecule id="Q8I4M5-2"/>
    <property type="nucleotide sequence ID" value="NM_059964.3"/>
</dbReference>
<dbReference type="RefSeq" id="NP_871882.2">
    <molecule id="Q8I4M5-1"/>
    <property type="nucleotide sequence ID" value="NM_182082.6"/>
</dbReference>
<dbReference type="BioGRID" id="38115">
    <property type="interactions" value="14"/>
</dbReference>
<dbReference type="ComplexPortal" id="CPX-1132">
    <property type="entry name" value="gls-1-gld-3 complex"/>
</dbReference>
<dbReference type="DIP" id="DIP-25830N"/>
<dbReference type="FunCoup" id="Q8I4M5">
    <property type="interactions" value="1431"/>
</dbReference>
<dbReference type="IntAct" id="Q8I4M5">
    <property type="interactions" value="6"/>
</dbReference>
<dbReference type="STRING" id="6239.C36B1.8b.1"/>
<dbReference type="PaxDb" id="6239-C36B1.8b"/>
<dbReference type="PeptideAtlas" id="Q8I4M5"/>
<dbReference type="EnsemblMetazoa" id="C36B1.8a.1">
    <molecule id="Q8I4M5-2"/>
    <property type="protein sequence ID" value="C36B1.8a.1"/>
    <property type="gene ID" value="WBGene00007975"/>
</dbReference>
<dbReference type="EnsemblMetazoa" id="C36B1.8b.1">
    <molecule id="Q8I4M5-1"/>
    <property type="protein sequence ID" value="C36B1.8b.1"/>
    <property type="gene ID" value="WBGene00007975"/>
</dbReference>
<dbReference type="EnsemblMetazoa" id="C36B1.8c.1">
    <molecule id="Q8I4M5-3"/>
    <property type="protein sequence ID" value="C36B1.8c.1"/>
    <property type="gene ID" value="WBGene00007975"/>
</dbReference>
<dbReference type="GeneID" id="172682"/>
<dbReference type="KEGG" id="cel:CELE_C36B1.8"/>
<dbReference type="UCSC" id="C36B1.8b">
    <property type="organism name" value="c. elegans"/>
</dbReference>
<dbReference type="AGR" id="WB:WBGene00007975"/>
<dbReference type="CTD" id="172682"/>
<dbReference type="WormBase" id="C36B1.8a">
    <molecule id="Q8I4M5-2"/>
    <property type="protein sequence ID" value="CE34472"/>
    <property type="gene ID" value="WBGene00007975"/>
    <property type="gene designation" value="gls-1"/>
</dbReference>
<dbReference type="WormBase" id="C36B1.8b">
    <molecule id="Q8I4M5-1"/>
    <property type="protein sequence ID" value="CE34473"/>
    <property type="gene ID" value="WBGene00007975"/>
    <property type="gene designation" value="gls-1"/>
</dbReference>
<dbReference type="WormBase" id="C36B1.8c">
    <molecule id="Q8I4M5-3"/>
    <property type="protein sequence ID" value="CE43936"/>
    <property type="gene ID" value="WBGene00007975"/>
    <property type="gene designation" value="gls-1"/>
</dbReference>
<dbReference type="eggNOG" id="ENOG502TI2R">
    <property type="taxonomic scope" value="Eukaryota"/>
</dbReference>
<dbReference type="GeneTree" id="ENSGT00520000055637"/>
<dbReference type="HOGENOM" id="CLU_013517_0_0_1"/>
<dbReference type="InParanoid" id="Q8I4M5"/>
<dbReference type="OMA" id="DEFGQQR"/>
<dbReference type="OrthoDB" id="5873202at2759"/>
<dbReference type="SignaLink" id="Q8I4M5"/>
<dbReference type="CD-CODE" id="73A75392">
    <property type="entry name" value="P-granule"/>
</dbReference>
<dbReference type="PRO" id="PR:Q8I4M5"/>
<dbReference type="Proteomes" id="UP000001940">
    <property type="component" value="Chromosome I"/>
</dbReference>
<dbReference type="Bgee" id="WBGene00007975">
    <property type="expression patterns" value="Expressed in germ line (C elegans) and 4 other cell types or tissues"/>
</dbReference>
<dbReference type="GO" id="GO:0005737">
    <property type="term" value="C:cytoplasm"/>
    <property type="evidence" value="ECO:0000314"/>
    <property type="project" value="WormBase"/>
</dbReference>
<dbReference type="GO" id="GO:0043186">
    <property type="term" value="C:P granule"/>
    <property type="evidence" value="ECO:0000314"/>
    <property type="project" value="WormBase"/>
</dbReference>
<dbReference type="GO" id="GO:0000993">
    <property type="term" value="F:RNA polymerase II complex binding"/>
    <property type="evidence" value="ECO:0000318"/>
    <property type="project" value="GO_Central"/>
</dbReference>
<dbReference type="GO" id="GO:0018992">
    <property type="term" value="P:germ-line sex determination"/>
    <property type="evidence" value="ECO:0000315"/>
    <property type="project" value="ComplexPortal"/>
</dbReference>
<dbReference type="GO" id="GO:0051321">
    <property type="term" value="P:meiotic cell cycle"/>
    <property type="evidence" value="ECO:0007669"/>
    <property type="project" value="UniProtKB-KW"/>
</dbReference>
<dbReference type="GO" id="GO:0031124">
    <property type="term" value="P:mRNA 3'-end processing"/>
    <property type="evidence" value="ECO:0000318"/>
    <property type="project" value="GO_Central"/>
</dbReference>
<dbReference type="GO" id="GO:0010628">
    <property type="term" value="P:positive regulation of gene expression"/>
    <property type="evidence" value="ECO:0000315"/>
    <property type="project" value="ComplexPortal"/>
</dbReference>
<dbReference type="GO" id="GO:0006417">
    <property type="term" value="P:regulation of translation"/>
    <property type="evidence" value="ECO:0000303"/>
    <property type="project" value="ComplexPortal"/>
</dbReference>
<dbReference type="Pfam" id="PF25479">
    <property type="entry name" value="Vts1"/>
    <property type="match status" value="1"/>
</dbReference>
<proteinExistence type="evidence at protein level"/>
<gene>
    <name evidence="9 11" type="primary">gls-1</name>
    <name type="ORF">C36B1.8</name>
</gene>